<accession>Q7MD44</accession>
<reference key="1">
    <citation type="journal article" date="2003" name="Genome Res.">
        <title>Comparative genome analysis of Vibrio vulnificus, a marine pathogen.</title>
        <authorList>
            <person name="Chen C.-Y."/>
            <person name="Wu K.-M."/>
            <person name="Chang Y.-C."/>
            <person name="Chang C.-H."/>
            <person name="Tsai H.-C."/>
            <person name="Liao T.-L."/>
            <person name="Liu Y.-M."/>
            <person name="Chen H.-J."/>
            <person name="Shen A.B.-T."/>
            <person name="Li J.-C."/>
            <person name="Su T.-L."/>
            <person name="Shao C.-P."/>
            <person name="Lee C.-T."/>
            <person name="Hor L.-I."/>
            <person name="Tsai S.-F."/>
        </authorList>
    </citation>
    <scope>NUCLEOTIDE SEQUENCE [LARGE SCALE GENOMIC DNA]</scope>
    <source>
        <strain>YJ016</strain>
    </source>
</reference>
<sequence length="829" mass="92800">MKMTRRAFVKANAAASAAAVAGITLPASAANLIASSDQTKITWDKAPCRFCGTGCSVLVGTQNGKVVATQGDPEAPVNKGLNCIKGYFLSKIMYGQDRLTQPLLRMKDGKYDKEGDFTPVSWDVAFDTMAEKWKASLAKKGPTSIGMFGSGQWTVMEGYAAAKMMKAGFRSNNIDPNARHCMASAVVGFMRTFGIDEPMGCYDDFEHADSFVLWGSNMAEMHPVLWTRITDRRLSHPHVKVNVLSTYYHRSFELADSGYIFKPQSDLAIANFIANYIIQNDAVNWDFVNKHTNFKQATTDIGYGLRDDDPLQKQAKNPNSGNMTSISFEEYKKSVAPYTVEKASEMSGVAQDKLIELAKQYADPNTKVMSLWTMGMNQHTRGVWMNSLVYNIHLLTGKIATPGNSPFSLTGQPSACGTAREVGTFAHRLPADMVVANPKHRAIAEKIWKLPEGTIPPKPGFHAVLQDRMLHDGVLNCYWVQCNNNMQAGPNINGERLPGYRNPENFIVVSDPYPTATAQAADLILPTAMWIEKEGAYGNAERRTQAWYQQVGTVGEAKSDLWQVMEFSKRFKMEEVWPEELLAKAPQYRGKTMYDMLFANGQVDKFPLSEARQLNDDSHHFGFYVQKGLFEEYAEFGRGHGHDLAPYDVYHTVRGLRWPVVDGKETLWRYKEGSDPYAKKGSGWDFYGKPDGKALIISAPYEAPPESPDAEYDMWLCTGRVLEHWHTGTMTRRVPELYKAVPDAVCYIHPEDAKARGLRRGDEVLISNKRGEVRVRVETRGRNRPPQGLVFVPFFDARILINKLILDATDPLSKQTDFKKCPVKITKVA</sequence>
<protein>
    <recommendedName>
        <fullName evidence="1">Periplasmic nitrate reductase</fullName>
        <ecNumber evidence="1">1.9.6.1</ecNumber>
    </recommendedName>
</protein>
<name>NAPA_VIBVY</name>
<organism>
    <name type="scientific">Vibrio vulnificus (strain YJ016)</name>
    <dbReference type="NCBI Taxonomy" id="196600"/>
    <lineage>
        <taxon>Bacteria</taxon>
        <taxon>Pseudomonadati</taxon>
        <taxon>Pseudomonadota</taxon>
        <taxon>Gammaproteobacteria</taxon>
        <taxon>Vibrionales</taxon>
        <taxon>Vibrionaceae</taxon>
        <taxon>Vibrio</taxon>
    </lineage>
</organism>
<gene>
    <name evidence="1" type="primary">napA</name>
    <name type="ordered locus">VVA1192</name>
</gene>
<evidence type="ECO:0000255" key="1">
    <source>
        <dbReference type="HAMAP-Rule" id="MF_01630"/>
    </source>
</evidence>
<comment type="function">
    <text evidence="1">Catalytic subunit of the periplasmic nitrate reductase complex NapAB. Receives electrons from NapB and catalyzes the reduction of nitrate to nitrite.</text>
</comment>
<comment type="catalytic activity">
    <reaction evidence="1">
        <text>2 Fe(II)-[cytochrome] + nitrate + 2 H(+) = 2 Fe(III)-[cytochrome] + nitrite + H2O</text>
        <dbReference type="Rhea" id="RHEA:12909"/>
        <dbReference type="Rhea" id="RHEA-COMP:11777"/>
        <dbReference type="Rhea" id="RHEA-COMP:11778"/>
        <dbReference type="ChEBI" id="CHEBI:15377"/>
        <dbReference type="ChEBI" id="CHEBI:15378"/>
        <dbReference type="ChEBI" id="CHEBI:16301"/>
        <dbReference type="ChEBI" id="CHEBI:17632"/>
        <dbReference type="ChEBI" id="CHEBI:29033"/>
        <dbReference type="ChEBI" id="CHEBI:29034"/>
        <dbReference type="EC" id="1.9.6.1"/>
    </reaction>
</comment>
<comment type="cofactor">
    <cofactor evidence="1">
        <name>[4Fe-4S] cluster</name>
        <dbReference type="ChEBI" id="CHEBI:49883"/>
    </cofactor>
    <text evidence="1">Binds 1 [4Fe-4S] cluster.</text>
</comment>
<comment type="cofactor">
    <cofactor evidence="1">
        <name>Mo-bis(molybdopterin guanine dinucleotide)</name>
        <dbReference type="ChEBI" id="CHEBI:60539"/>
    </cofactor>
    <text evidence="1">Binds 1 molybdenum-bis(molybdopterin guanine dinucleotide) (Mo-bis-MGD) cofactor per subunit.</text>
</comment>
<comment type="subunit">
    <text evidence="1">Component of the periplasmic nitrate reductase NapAB complex composed of NapA and NapB.</text>
</comment>
<comment type="subcellular location">
    <subcellularLocation>
        <location evidence="1">Periplasm</location>
    </subcellularLocation>
</comment>
<comment type="PTM">
    <text evidence="1">Predicted to be exported by the Tat system. The position of the signal peptide cleavage has not been experimentally proven.</text>
</comment>
<comment type="similarity">
    <text evidence="1">Belongs to the prokaryotic molybdopterin-containing oxidoreductase family. NasA/NapA/NarB subfamily.</text>
</comment>
<dbReference type="EC" id="1.9.6.1" evidence="1"/>
<dbReference type="EMBL" id="BA000038">
    <property type="protein sequence ID" value="BAC97218.1"/>
    <property type="molecule type" value="Genomic_DNA"/>
</dbReference>
<dbReference type="RefSeq" id="WP_011152449.1">
    <property type="nucleotide sequence ID" value="NC_005140.1"/>
</dbReference>
<dbReference type="SMR" id="Q7MD44"/>
<dbReference type="STRING" id="672.VV93_v1c41190"/>
<dbReference type="KEGG" id="vvy:VVA1192"/>
<dbReference type="PATRIC" id="fig|196600.6.peg.4347"/>
<dbReference type="eggNOG" id="COG0243">
    <property type="taxonomic scope" value="Bacteria"/>
</dbReference>
<dbReference type="HOGENOM" id="CLU_000422_13_4_6"/>
<dbReference type="Proteomes" id="UP000002675">
    <property type="component" value="Chromosome II"/>
</dbReference>
<dbReference type="GO" id="GO:0016020">
    <property type="term" value="C:membrane"/>
    <property type="evidence" value="ECO:0007669"/>
    <property type="project" value="TreeGrafter"/>
</dbReference>
<dbReference type="GO" id="GO:0009325">
    <property type="term" value="C:nitrate reductase complex"/>
    <property type="evidence" value="ECO:0007669"/>
    <property type="project" value="TreeGrafter"/>
</dbReference>
<dbReference type="GO" id="GO:0042597">
    <property type="term" value="C:periplasmic space"/>
    <property type="evidence" value="ECO:0007669"/>
    <property type="project" value="UniProtKB-SubCell"/>
</dbReference>
<dbReference type="GO" id="GO:0051539">
    <property type="term" value="F:4 iron, 4 sulfur cluster binding"/>
    <property type="evidence" value="ECO:0007669"/>
    <property type="project" value="UniProtKB-KW"/>
</dbReference>
<dbReference type="GO" id="GO:0009055">
    <property type="term" value="F:electron transfer activity"/>
    <property type="evidence" value="ECO:0007669"/>
    <property type="project" value="UniProtKB-UniRule"/>
</dbReference>
<dbReference type="GO" id="GO:0005506">
    <property type="term" value="F:iron ion binding"/>
    <property type="evidence" value="ECO:0007669"/>
    <property type="project" value="UniProtKB-UniRule"/>
</dbReference>
<dbReference type="GO" id="GO:0030151">
    <property type="term" value="F:molybdenum ion binding"/>
    <property type="evidence" value="ECO:0007669"/>
    <property type="project" value="InterPro"/>
</dbReference>
<dbReference type="GO" id="GO:0043546">
    <property type="term" value="F:molybdopterin cofactor binding"/>
    <property type="evidence" value="ECO:0007669"/>
    <property type="project" value="InterPro"/>
</dbReference>
<dbReference type="GO" id="GO:0050140">
    <property type="term" value="F:nitrate reductase (cytochrome) activity"/>
    <property type="evidence" value="ECO:0007669"/>
    <property type="project" value="UniProtKB-EC"/>
</dbReference>
<dbReference type="GO" id="GO:0045333">
    <property type="term" value="P:cellular respiration"/>
    <property type="evidence" value="ECO:0007669"/>
    <property type="project" value="UniProtKB-ARBA"/>
</dbReference>
<dbReference type="GO" id="GO:0006777">
    <property type="term" value="P:Mo-molybdopterin cofactor biosynthetic process"/>
    <property type="evidence" value="ECO:0007669"/>
    <property type="project" value="UniProtKB-UniRule"/>
</dbReference>
<dbReference type="GO" id="GO:0042128">
    <property type="term" value="P:nitrate assimilation"/>
    <property type="evidence" value="ECO:0007669"/>
    <property type="project" value="UniProtKB-UniRule"/>
</dbReference>
<dbReference type="CDD" id="cd02791">
    <property type="entry name" value="MopB_CT_Nitrate-R-NapA-like"/>
    <property type="match status" value="1"/>
</dbReference>
<dbReference type="CDD" id="cd02754">
    <property type="entry name" value="MopB_Nitrate-R-NapA-like"/>
    <property type="match status" value="1"/>
</dbReference>
<dbReference type="FunFam" id="2.40.40.20:FF:000005">
    <property type="entry name" value="Periplasmic nitrate reductase"/>
    <property type="match status" value="1"/>
</dbReference>
<dbReference type="Gene3D" id="2.40.40.20">
    <property type="match status" value="1"/>
</dbReference>
<dbReference type="Gene3D" id="3.30.200.210">
    <property type="match status" value="1"/>
</dbReference>
<dbReference type="Gene3D" id="3.40.50.740">
    <property type="match status" value="1"/>
</dbReference>
<dbReference type="Gene3D" id="3.40.228.10">
    <property type="entry name" value="Dimethylsulfoxide Reductase, domain 2"/>
    <property type="match status" value="1"/>
</dbReference>
<dbReference type="HAMAP" id="MF_01630">
    <property type="entry name" value="Nitrate_reduct_NapA"/>
    <property type="match status" value="1"/>
</dbReference>
<dbReference type="InterPro" id="IPR009010">
    <property type="entry name" value="Asp_de-COase-like_dom_sf"/>
</dbReference>
<dbReference type="InterPro" id="IPR041957">
    <property type="entry name" value="CT_Nitrate-R-NapA-like"/>
</dbReference>
<dbReference type="InterPro" id="IPR006657">
    <property type="entry name" value="MoPterin_dinucl-bd_dom"/>
</dbReference>
<dbReference type="InterPro" id="IPR006656">
    <property type="entry name" value="Mopterin_OxRdtase"/>
</dbReference>
<dbReference type="InterPro" id="IPR006963">
    <property type="entry name" value="Mopterin_OxRdtase_4Fe-4S_dom"/>
</dbReference>
<dbReference type="InterPro" id="IPR027467">
    <property type="entry name" value="MopterinOxRdtase_cofactor_BS"/>
</dbReference>
<dbReference type="InterPro" id="IPR010051">
    <property type="entry name" value="Periplasm_NO3_reductase_lsu"/>
</dbReference>
<dbReference type="InterPro" id="IPR050123">
    <property type="entry name" value="Prok_molybdopt-oxidoreductase"/>
</dbReference>
<dbReference type="InterPro" id="IPR006311">
    <property type="entry name" value="TAT_signal"/>
</dbReference>
<dbReference type="NCBIfam" id="TIGR01706">
    <property type="entry name" value="NAPA"/>
    <property type="match status" value="1"/>
</dbReference>
<dbReference type="NCBIfam" id="NF010055">
    <property type="entry name" value="PRK13532.1"/>
    <property type="match status" value="1"/>
</dbReference>
<dbReference type="PANTHER" id="PTHR43105:SF11">
    <property type="entry name" value="PERIPLASMIC NITRATE REDUCTASE"/>
    <property type="match status" value="1"/>
</dbReference>
<dbReference type="PANTHER" id="PTHR43105">
    <property type="entry name" value="RESPIRATORY NITRATE REDUCTASE"/>
    <property type="match status" value="1"/>
</dbReference>
<dbReference type="Pfam" id="PF04879">
    <property type="entry name" value="Molybdop_Fe4S4"/>
    <property type="match status" value="1"/>
</dbReference>
<dbReference type="Pfam" id="PF00384">
    <property type="entry name" value="Molybdopterin"/>
    <property type="match status" value="1"/>
</dbReference>
<dbReference type="Pfam" id="PF01568">
    <property type="entry name" value="Molydop_binding"/>
    <property type="match status" value="1"/>
</dbReference>
<dbReference type="SMART" id="SM00926">
    <property type="entry name" value="Molybdop_Fe4S4"/>
    <property type="match status" value="1"/>
</dbReference>
<dbReference type="SUPFAM" id="SSF50692">
    <property type="entry name" value="ADC-like"/>
    <property type="match status" value="1"/>
</dbReference>
<dbReference type="SUPFAM" id="SSF53706">
    <property type="entry name" value="Formate dehydrogenase/DMSO reductase, domains 1-3"/>
    <property type="match status" value="1"/>
</dbReference>
<dbReference type="PROSITE" id="PS51669">
    <property type="entry name" value="4FE4S_MOW_BIS_MGD"/>
    <property type="match status" value="1"/>
</dbReference>
<dbReference type="PROSITE" id="PS00551">
    <property type="entry name" value="MOLYBDOPTERIN_PROK_1"/>
    <property type="match status" value="1"/>
</dbReference>
<dbReference type="PROSITE" id="PS51318">
    <property type="entry name" value="TAT"/>
    <property type="match status" value="1"/>
</dbReference>
<proteinExistence type="inferred from homology"/>
<feature type="signal peptide" description="Tat-type signal" evidence="1">
    <location>
        <begin position="1"/>
        <end position="30"/>
    </location>
</feature>
<feature type="chain" id="PRO_0000046013" description="Periplasmic nitrate reductase" evidence="1">
    <location>
        <begin position="31"/>
        <end position="829"/>
    </location>
</feature>
<feature type="domain" description="4Fe-4S Mo/W bis-MGD-type" evidence="1">
    <location>
        <begin position="41"/>
        <end position="97"/>
    </location>
</feature>
<feature type="binding site" evidence="1">
    <location>
        <position position="48"/>
    </location>
    <ligand>
        <name>[4Fe-4S] cluster</name>
        <dbReference type="ChEBI" id="CHEBI:49883"/>
    </ligand>
</feature>
<feature type="binding site" evidence="1">
    <location>
        <position position="51"/>
    </location>
    <ligand>
        <name>[4Fe-4S] cluster</name>
        <dbReference type="ChEBI" id="CHEBI:49883"/>
    </ligand>
</feature>
<feature type="binding site" evidence="1">
    <location>
        <position position="55"/>
    </location>
    <ligand>
        <name>[4Fe-4S] cluster</name>
        <dbReference type="ChEBI" id="CHEBI:49883"/>
    </ligand>
</feature>
<feature type="binding site" evidence="1">
    <location>
        <position position="83"/>
    </location>
    <ligand>
        <name>[4Fe-4S] cluster</name>
        <dbReference type="ChEBI" id="CHEBI:49883"/>
    </ligand>
</feature>
<feature type="binding site" evidence="1">
    <location>
        <position position="85"/>
    </location>
    <ligand>
        <name>Mo-bis(molybdopterin guanine dinucleotide)</name>
        <dbReference type="ChEBI" id="CHEBI:60539"/>
    </ligand>
</feature>
<feature type="binding site" evidence="1">
    <location>
        <position position="152"/>
    </location>
    <ligand>
        <name>Mo-bis(molybdopterin guanine dinucleotide)</name>
        <dbReference type="ChEBI" id="CHEBI:60539"/>
    </ligand>
</feature>
<feature type="binding site" evidence="1">
    <location>
        <position position="177"/>
    </location>
    <ligand>
        <name>Mo-bis(molybdopterin guanine dinucleotide)</name>
        <dbReference type="ChEBI" id="CHEBI:60539"/>
    </ligand>
</feature>
<feature type="binding site" evidence="1">
    <location>
        <position position="181"/>
    </location>
    <ligand>
        <name>Mo-bis(molybdopterin guanine dinucleotide)</name>
        <dbReference type="ChEBI" id="CHEBI:60539"/>
    </ligand>
</feature>
<feature type="binding site" evidence="1">
    <location>
        <begin position="214"/>
        <end position="221"/>
    </location>
    <ligand>
        <name>Mo-bis(molybdopterin guanine dinucleotide)</name>
        <dbReference type="ChEBI" id="CHEBI:60539"/>
    </ligand>
</feature>
<feature type="binding site" evidence="1">
    <location>
        <begin position="245"/>
        <end position="249"/>
    </location>
    <ligand>
        <name>Mo-bis(molybdopterin guanine dinucleotide)</name>
        <dbReference type="ChEBI" id="CHEBI:60539"/>
    </ligand>
</feature>
<feature type="binding site" evidence="1">
    <location>
        <begin position="264"/>
        <end position="266"/>
    </location>
    <ligand>
        <name>Mo-bis(molybdopterin guanine dinucleotide)</name>
        <dbReference type="ChEBI" id="CHEBI:60539"/>
    </ligand>
</feature>
<feature type="binding site" evidence="1">
    <location>
        <position position="374"/>
    </location>
    <ligand>
        <name>Mo-bis(molybdopterin guanine dinucleotide)</name>
        <dbReference type="ChEBI" id="CHEBI:60539"/>
    </ligand>
</feature>
<feature type="binding site" evidence="1">
    <location>
        <position position="378"/>
    </location>
    <ligand>
        <name>Mo-bis(molybdopterin guanine dinucleotide)</name>
        <dbReference type="ChEBI" id="CHEBI:60539"/>
    </ligand>
</feature>
<feature type="binding site" evidence="1">
    <location>
        <position position="484"/>
    </location>
    <ligand>
        <name>Mo-bis(molybdopterin guanine dinucleotide)</name>
        <dbReference type="ChEBI" id="CHEBI:60539"/>
    </ligand>
</feature>
<feature type="binding site" evidence="1">
    <location>
        <begin position="510"/>
        <end position="511"/>
    </location>
    <ligand>
        <name>Mo-bis(molybdopterin guanine dinucleotide)</name>
        <dbReference type="ChEBI" id="CHEBI:60539"/>
    </ligand>
</feature>
<feature type="binding site" evidence="1">
    <location>
        <position position="533"/>
    </location>
    <ligand>
        <name>Mo-bis(molybdopterin guanine dinucleotide)</name>
        <dbReference type="ChEBI" id="CHEBI:60539"/>
    </ligand>
</feature>
<feature type="binding site" evidence="1">
    <location>
        <position position="560"/>
    </location>
    <ligand>
        <name>Mo-bis(molybdopterin guanine dinucleotide)</name>
        <dbReference type="ChEBI" id="CHEBI:60539"/>
    </ligand>
</feature>
<feature type="binding site" evidence="1">
    <location>
        <begin position="718"/>
        <end position="727"/>
    </location>
    <ligand>
        <name>Mo-bis(molybdopterin guanine dinucleotide)</name>
        <dbReference type="ChEBI" id="CHEBI:60539"/>
    </ligand>
</feature>
<feature type="binding site" evidence="1">
    <location>
        <position position="794"/>
    </location>
    <ligand>
        <name>substrate</name>
    </ligand>
</feature>
<feature type="binding site" evidence="1">
    <location>
        <position position="802"/>
    </location>
    <ligand>
        <name>Mo-bis(molybdopterin guanine dinucleotide)</name>
        <dbReference type="ChEBI" id="CHEBI:60539"/>
    </ligand>
</feature>
<feature type="binding site" evidence="1">
    <location>
        <position position="819"/>
    </location>
    <ligand>
        <name>Mo-bis(molybdopterin guanine dinucleotide)</name>
        <dbReference type="ChEBI" id="CHEBI:60539"/>
    </ligand>
</feature>
<keyword id="KW-0004">4Fe-4S</keyword>
<keyword id="KW-0249">Electron transport</keyword>
<keyword id="KW-0408">Iron</keyword>
<keyword id="KW-0411">Iron-sulfur</keyword>
<keyword id="KW-0479">Metal-binding</keyword>
<keyword id="KW-0500">Molybdenum</keyword>
<keyword id="KW-0534">Nitrate assimilation</keyword>
<keyword id="KW-0560">Oxidoreductase</keyword>
<keyword id="KW-0574">Periplasm</keyword>
<keyword id="KW-0732">Signal</keyword>
<keyword id="KW-0813">Transport</keyword>